<gene>
    <name type="ORF">ORF3a</name>
</gene>
<evidence type="ECO:0000256" key="1">
    <source>
        <dbReference type="SAM" id="MobiDB-lite"/>
    </source>
</evidence>
<evidence type="ECO:0000269" key="2">
    <source>
    </source>
</evidence>
<evidence type="ECO:0000269" key="3">
    <source>
    </source>
</evidence>
<evidence type="ECO:0000305" key="4"/>
<sequence length="303" mass="32482">MSNIVSPFSGSSRTTSDVGKQAGGTSDEKLIESLFSEKAVKEIAAECKLGCYNYLKSNEPRNYIDLVPKSHVSAWLSWATSKYDKGELPSRGFMNVPRIVCFLVRTTDSAESGSITVSLCDSGKAARAGVLEAIDNQEATIQLSALPALIALTPSYDCPMEVIGGDSGRNRCFGIATQLSGVVGTTGSVAVTHAYWQANFKAKPNNYKLHGPATIMVMPFDRLRQLDKKSLKNYIRGISNQSVDHGYLLGRPLQSVDQVAQEDLLVEESESPSALGRGVKDSKSVSASSVAGLPVSSPTLRIK</sequence>
<keyword id="KW-1031">Host cell junction</keyword>
<keyword id="KW-1185">Reference proteome</keyword>
<keyword id="KW-0813">Transport</keyword>
<keyword id="KW-0916">Viral movement protein</keyword>
<dbReference type="EMBL" id="J02042">
    <property type="protein sequence ID" value="AAA46333.1"/>
    <property type="molecule type" value="Genomic_RNA"/>
</dbReference>
<dbReference type="PIR" id="A04214">
    <property type="entry name" value="P3BVAM"/>
</dbReference>
<dbReference type="RefSeq" id="NP_041198.1">
    <property type="nucleotide sequence ID" value="NC_002028.2"/>
</dbReference>
<dbReference type="KEGG" id="vg:962147"/>
<dbReference type="OrthoDB" id="11253at10239"/>
<dbReference type="Proteomes" id="UP000001649">
    <property type="component" value="Genome"/>
</dbReference>
<dbReference type="GO" id="GO:0044219">
    <property type="term" value="C:host cell plasmodesma"/>
    <property type="evidence" value="ECO:0007669"/>
    <property type="project" value="UniProtKB-SubCell"/>
</dbReference>
<dbReference type="GO" id="GO:0046740">
    <property type="term" value="P:transport of virus in host, cell to cell"/>
    <property type="evidence" value="ECO:0007669"/>
    <property type="project" value="UniProtKB-KW"/>
</dbReference>
<dbReference type="InterPro" id="IPR000603">
    <property type="entry name" value="MPV"/>
</dbReference>
<dbReference type="Pfam" id="PF00803">
    <property type="entry name" value="3A"/>
    <property type="match status" value="1"/>
</dbReference>
<name>MVP_BMV</name>
<organism>
    <name type="scientific">Brome mosaic virus</name>
    <name type="common">BMV</name>
    <dbReference type="NCBI Taxonomy" id="12302"/>
    <lineage>
        <taxon>Viruses</taxon>
        <taxon>Riboviria</taxon>
        <taxon>Orthornavirae</taxon>
        <taxon>Kitrinoviricota</taxon>
        <taxon>Alsuviricetes</taxon>
        <taxon>Martellivirales</taxon>
        <taxon>Bromoviridae</taxon>
        <taxon>Bromovirus</taxon>
    </lineage>
</organism>
<reference key="1">
    <citation type="journal article" date="1981" name="J. Mol. Biol.">
        <title>Complete nucleotide sequence of brome mosaic virus RNA3.</title>
        <authorList>
            <person name="Ahlquist P."/>
            <person name="Luckow V."/>
            <person name="Kaesberg P."/>
        </authorList>
    </citation>
    <scope>NUCLEOTIDE SEQUENCE [GENOMIC RNA]</scope>
</reference>
<reference key="2">
    <citation type="journal article" date="1997" name="J. Gen. Virol.">
        <title>Tubule-forming capacity of the movement proteins of alfalfa mosaic virus and brome mosaic virus.</title>
        <authorList>
            <person name="Kasteel D.T."/>
            <person name="van der Wel N.N."/>
            <person name="Jansen K.A."/>
            <person name="Goldbach R.W."/>
            <person name="van Lent J.W."/>
        </authorList>
    </citation>
    <scope>SUBCELLULAR LOCATION</scope>
</reference>
<reference key="3">
    <citation type="journal article" date="2007" name="Arch. Virol.">
        <title>Phosphorylation and interaction of the movement and coat proteins of brome mosaic virus in infected barley protoplasts.</title>
        <authorList>
            <person name="Akamatsu N."/>
            <person name="Takeda A."/>
            <person name="Kishimoto M."/>
            <person name="Kaido M."/>
            <person name="Okuno T."/>
            <person name="Mise K."/>
        </authorList>
    </citation>
    <scope>PHOSPHORYLATION BY HOST</scope>
</reference>
<organismHost>
    <name type="scientific">Bromus inermis</name>
    <name type="common">Smooth brome grass</name>
    <name type="synonym">Bromopsis inermis</name>
    <dbReference type="NCBI Taxonomy" id="15371"/>
</organismHost>
<accession>P03603</accession>
<proteinExistence type="evidence at protein level"/>
<protein>
    <recommendedName>
        <fullName>Movement protein</fullName>
        <shortName>MP</shortName>
    </recommendedName>
    <alternativeName>
        <fullName>Protein 3A</fullName>
    </alternativeName>
</protein>
<feature type="chain" id="PRO_0000083231" description="Movement protein">
    <location>
        <begin position="1"/>
        <end position="303"/>
    </location>
</feature>
<feature type="region of interest" description="Disordered" evidence="1">
    <location>
        <begin position="1"/>
        <end position="24"/>
    </location>
</feature>
<feature type="region of interest" description="Disordered" evidence="1">
    <location>
        <begin position="267"/>
        <end position="303"/>
    </location>
</feature>
<feature type="compositionally biased region" description="Polar residues" evidence="1">
    <location>
        <begin position="1"/>
        <end position="18"/>
    </location>
</feature>
<comment type="function">
    <text>Transports viral genome to neighboring plant cells directly through plasmosdesmata, without any budding. The movement protein allows efficient cell to cell propagation, by bypassing the host cell wall barrier. Acts by forming a tubular structure at the host plasmodesmata, enlarging it enough to allow free passage of virion capsids.</text>
</comment>
<comment type="subcellular location">
    <subcellularLocation>
        <location evidence="3">Host cell junction</location>
        <location evidence="3">Host plasmodesma</location>
    </subcellularLocation>
    <text>Assembles into long tubular structures at the surface of the infected protoplast.</text>
</comment>
<comment type="PTM">
    <text evidence="2">Phosphorylated by host.</text>
</comment>
<comment type="similarity">
    <text evidence="4">Belongs to the bromovirus movement protein family.</text>
</comment>